<reference key="1">
    <citation type="journal article" date="1997" name="Science">
        <title>The complete genome sequence of Escherichia coli K-12.</title>
        <authorList>
            <person name="Blattner F.R."/>
            <person name="Plunkett G. III"/>
            <person name="Bloch C.A."/>
            <person name="Perna N.T."/>
            <person name="Burland V."/>
            <person name="Riley M."/>
            <person name="Collado-Vides J."/>
            <person name="Glasner J.D."/>
            <person name="Rode C.K."/>
            <person name="Mayhew G.F."/>
            <person name="Gregor J."/>
            <person name="Davis N.W."/>
            <person name="Kirkpatrick H.A."/>
            <person name="Goeden M.A."/>
            <person name="Rose D.J."/>
            <person name="Mau B."/>
            <person name="Shao Y."/>
        </authorList>
    </citation>
    <scope>NUCLEOTIDE SEQUENCE [LARGE SCALE GENOMIC DNA]</scope>
    <source>
        <strain>K12 / MG1655 / ATCC 47076</strain>
    </source>
</reference>
<reference key="2">
    <citation type="journal article" date="2006" name="Mol. Syst. Biol.">
        <title>Highly accurate genome sequences of Escherichia coli K-12 strains MG1655 and W3110.</title>
        <authorList>
            <person name="Hayashi K."/>
            <person name="Morooka N."/>
            <person name="Yamamoto Y."/>
            <person name="Fujita K."/>
            <person name="Isono K."/>
            <person name="Choi S."/>
            <person name="Ohtsubo E."/>
            <person name="Baba T."/>
            <person name="Wanner B.L."/>
            <person name="Mori H."/>
            <person name="Horiuchi T."/>
        </authorList>
    </citation>
    <scope>NUCLEOTIDE SEQUENCE [LARGE SCALE GENOMIC DNA]</scope>
    <source>
        <strain>K12 / W3110 / ATCC 27325 / DSM 5911</strain>
    </source>
</reference>
<reference key="3">
    <citation type="journal article" date="1990" name="DNA Seq.">
        <title>Nucleotide sequence and expression of the gutQ gene within the glucitol operon of Escherichia coli.</title>
        <authorList>
            <person name="Yamada M."/>
            <person name="Yamada Y."/>
            <person name="Saier M.H. Jr."/>
        </authorList>
    </citation>
    <scope>NUCLEOTIDE SEQUENCE [GENOMIC DNA] OF 3-313</scope>
    <source>
        <strain>K12</strain>
    </source>
</reference>
<reference key="4">
    <citation type="journal article" date="2007" name="Proteomics">
        <title>From the genome sequence to the proteome and back: evaluation of E. coli genome annotation with a 2-D gel-based proteomics approach.</title>
        <authorList>
            <person name="Maillet I."/>
            <person name="Berndt P."/>
            <person name="Malo C."/>
            <person name="Rodriguez S."/>
            <person name="Brunisholz R.A."/>
            <person name="Pragai Z."/>
            <person name="Arnold S."/>
            <person name="Langen H."/>
            <person name="Wyss M."/>
        </authorList>
    </citation>
    <scope>PROTEIN SEQUENCE OF 2-6</scope>
    <source>
        <strain>K12 / JM109 / ATCC 53323</strain>
    </source>
</reference>
<reference key="5">
    <citation type="journal article" date="2005" name="J. Bacteriol.">
        <title>Identification of GutQ from Escherichia coli as a D-arabinose 5-phosphate isomerase.</title>
        <authorList>
            <person name="Meredith T.C."/>
            <person name="Woodard R.W."/>
        </authorList>
    </citation>
    <scope>FUNCTION</scope>
    <scope>CATALYTIC ACTIVITY</scope>
    <scope>BIOPHYSICOCHEMICAL PROPERTIES</scope>
    <scope>SUBUNIT</scope>
    <scope>NOMENCLATURE</scope>
    <source>
        <strain>K12 / MG1655 / ATCC 47076</strain>
    </source>
</reference>
<accession>P17115</accession>
<accession>Q2MAC1</accession>
<accession>Q46874</accession>
<comment type="function">
    <text evidence="5">Catalyzes the reversible aldol-ketol isomerization between D-ribulose 5-phosphate (Ru5P) and D-arabinose 5-phosphate (A5P). It appears that the physiological function of G-API may be to synthesize the regulatory molecule A5P, which in turn participates in the induction of the gut operon through an unknown mechanism. It is also able of sustaining the biosynthetic pathway of 3-deoxy-D-manno-octulosonate (KDO), a unique 8-carbon sugar component of lipopolysaccharides (LPSs).</text>
</comment>
<comment type="catalytic activity">
    <reaction evidence="5">
        <text>D-arabinose 5-phosphate = D-ribulose 5-phosphate</text>
        <dbReference type="Rhea" id="RHEA:23104"/>
        <dbReference type="ChEBI" id="CHEBI:57693"/>
        <dbReference type="ChEBI" id="CHEBI:58121"/>
        <dbReference type="EC" id="5.3.1.13"/>
    </reaction>
    <physiologicalReaction direction="left-to-right" evidence="5">
        <dbReference type="Rhea" id="RHEA:23105"/>
    </physiologicalReaction>
    <physiologicalReaction direction="right-to-left" evidence="5">
        <dbReference type="Rhea" id="RHEA:23106"/>
    </physiologicalReaction>
</comment>
<comment type="biophysicochemical properties">
    <kinetics>
        <KM evidence="5">0.64 mM for Ru5P (at pH 8.25 and at 37 degrees Celsius)</KM>
        <KM evidence="5">1.2 mM for A5P (at pH 8.25 and at 37 degrees Celsius)</KM>
    </kinetics>
    <phDependence>
        <text evidence="5">Optimum pH is 8.25.</text>
    </phDependence>
</comment>
<comment type="subunit">
    <text evidence="5">Homotetramer.</text>
</comment>
<comment type="similarity">
    <text evidence="7">Belongs to the SIS family. GutQ/KpsF subfamily.</text>
</comment>
<comment type="sequence caution" evidence="7">
    <conflict type="erroneous initiation">
        <sequence resource="EMBL-CDS" id="AAA69217"/>
    </conflict>
    <text>Truncated N-terminus.</text>
</comment>
<comment type="sequence caution" evidence="7">
    <conflict type="erroneous initiation">
        <sequence resource="EMBL-CDS" id="CAA35745"/>
    </conflict>
    <text>Truncated N-terminus.</text>
</comment>
<comment type="sequence caution" evidence="7">
    <conflict type="frameshift">
        <sequence resource="EMBL-CDS" id="CAA35745"/>
    </conflict>
</comment>
<keyword id="KW-0067">ATP-binding</keyword>
<keyword id="KW-0129">CBS domain</keyword>
<keyword id="KW-0903">Direct protein sequencing</keyword>
<keyword id="KW-0413">Isomerase</keyword>
<keyword id="KW-0448">Lipopolysaccharide biosynthesis</keyword>
<keyword id="KW-0479">Metal-binding</keyword>
<keyword id="KW-0547">Nucleotide-binding</keyword>
<keyword id="KW-1185">Reference proteome</keyword>
<keyword id="KW-0677">Repeat</keyword>
<keyword id="KW-0862">Zinc</keyword>
<organism>
    <name type="scientific">Escherichia coli (strain K12)</name>
    <dbReference type="NCBI Taxonomy" id="83333"/>
    <lineage>
        <taxon>Bacteria</taxon>
        <taxon>Pseudomonadati</taxon>
        <taxon>Pseudomonadota</taxon>
        <taxon>Gammaproteobacteria</taxon>
        <taxon>Enterobacterales</taxon>
        <taxon>Enterobacteriaceae</taxon>
        <taxon>Escherichia</taxon>
    </lineage>
</organism>
<gene>
    <name type="primary">gutQ</name>
    <name type="synonym">srlQ</name>
    <name type="ordered locus">b2708</name>
    <name type="ordered locus">JW5431</name>
</gene>
<protein>
    <recommendedName>
        <fullName>Arabinose 5-phosphate isomerase GutQ</fullName>
        <shortName>API</shortName>
        <shortName>G-API</shortName>
        <ecNumber evidence="5">5.3.1.13</ecNumber>
    </recommendedName>
    <alternativeName>
        <fullName>Phosphosugar aldol-ketol isomerase</fullName>
    </alternativeName>
</protein>
<name>GUTQ_ECOLI</name>
<evidence type="ECO:0000250" key="1"/>
<evidence type="ECO:0000255" key="2"/>
<evidence type="ECO:0000255" key="3">
    <source>
        <dbReference type="PROSITE-ProRule" id="PRU00703"/>
    </source>
</evidence>
<evidence type="ECO:0000255" key="4">
    <source>
        <dbReference type="PROSITE-ProRule" id="PRU00797"/>
    </source>
</evidence>
<evidence type="ECO:0000269" key="5">
    <source>
    </source>
</evidence>
<evidence type="ECO:0000269" key="6">
    <source>
    </source>
</evidence>
<evidence type="ECO:0000305" key="7"/>
<dbReference type="EC" id="5.3.1.13" evidence="5"/>
<dbReference type="EMBL" id="U29579">
    <property type="protein sequence ID" value="AAA69217.1"/>
    <property type="status" value="ALT_INIT"/>
    <property type="molecule type" value="Genomic_DNA"/>
</dbReference>
<dbReference type="EMBL" id="U00096">
    <property type="protein sequence ID" value="AAC75750.2"/>
    <property type="molecule type" value="Genomic_DNA"/>
</dbReference>
<dbReference type="EMBL" id="AP009048">
    <property type="protein sequence ID" value="BAE76785.1"/>
    <property type="molecule type" value="Genomic_DNA"/>
</dbReference>
<dbReference type="EMBL" id="X51361">
    <property type="protein sequence ID" value="CAA35745.1"/>
    <property type="status" value="ALT_SEQ"/>
    <property type="molecule type" value="Genomic_DNA"/>
</dbReference>
<dbReference type="RefSeq" id="NP_417188.4">
    <property type="nucleotide sequence ID" value="NC_000913.3"/>
</dbReference>
<dbReference type="RefSeq" id="WP_001287420.1">
    <property type="nucleotide sequence ID" value="NZ_LN832404.1"/>
</dbReference>
<dbReference type="SMR" id="P17115"/>
<dbReference type="BioGRID" id="4263273">
    <property type="interactions" value="295"/>
</dbReference>
<dbReference type="FunCoup" id="P17115">
    <property type="interactions" value="84"/>
</dbReference>
<dbReference type="IntAct" id="P17115">
    <property type="interactions" value="2"/>
</dbReference>
<dbReference type="STRING" id="511145.b2708"/>
<dbReference type="jPOST" id="P17115"/>
<dbReference type="PaxDb" id="511145-b2708"/>
<dbReference type="EnsemblBacteria" id="AAC75750">
    <property type="protein sequence ID" value="AAC75750"/>
    <property type="gene ID" value="b2708"/>
</dbReference>
<dbReference type="GeneID" id="947587"/>
<dbReference type="KEGG" id="ecj:JW5431"/>
<dbReference type="KEGG" id="eco:b2708"/>
<dbReference type="KEGG" id="ecoc:C3026_14905"/>
<dbReference type="PATRIC" id="fig|511145.12.peg.2799"/>
<dbReference type="EchoBASE" id="EB0966"/>
<dbReference type="eggNOG" id="COG0517">
    <property type="taxonomic scope" value="Bacteria"/>
</dbReference>
<dbReference type="eggNOG" id="COG0794">
    <property type="taxonomic scope" value="Bacteria"/>
</dbReference>
<dbReference type="HOGENOM" id="CLU_040681_13_1_6"/>
<dbReference type="InParanoid" id="P17115"/>
<dbReference type="OMA" id="KDQYAAN"/>
<dbReference type="OrthoDB" id="9762536at2"/>
<dbReference type="PhylomeDB" id="P17115"/>
<dbReference type="BioCyc" id="EcoCyc:EG10973-MONOMER"/>
<dbReference type="BioCyc" id="MetaCyc:EG10973-MONOMER"/>
<dbReference type="PRO" id="PR:P17115"/>
<dbReference type="Proteomes" id="UP000000625">
    <property type="component" value="Chromosome"/>
</dbReference>
<dbReference type="GO" id="GO:0019146">
    <property type="term" value="F:arabinose-5-phosphate isomerase activity"/>
    <property type="evidence" value="ECO:0000314"/>
    <property type="project" value="EcoCyc"/>
</dbReference>
<dbReference type="GO" id="GO:0005524">
    <property type="term" value="F:ATP binding"/>
    <property type="evidence" value="ECO:0007669"/>
    <property type="project" value="UniProtKB-KW"/>
</dbReference>
<dbReference type="GO" id="GO:0042802">
    <property type="term" value="F:identical protein binding"/>
    <property type="evidence" value="ECO:0000314"/>
    <property type="project" value="EcoCyc"/>
</dbReference>
<dbReference type="GO" id="GO:0046872">
    <property type="term" value="F:metal ion binding"/>
    <property type="evidence" value="ECO:0007669"/>
    <property type="project" value="UniProtKB-KW"/>
</dbReference>
<dbReference type="GO" id="GO:0019294">
    <property type="term" value="P:keto-3-deoxy-D-manno-octulosonic acid biosynthetic process"/>
    <property type="evidence" value="ECO:0000315"/>
    <property type="project" value="UniProtKB"/>
</dbReference>
<dbReference type="GO" id="GO:0051289">
    <property type="term" value="P:protein homotetramerization"/>
    <property type="evidence" value="ECO:0000314"/>
    <property type="project" value="EcoCyc"/>
</dbReference>
<dbReference type="GO" id="GO:0044010">
    <property type="term" value="P:single-species biofilm formation"/>
    <property type="evidence" value="ECO:0000315"/>
    <property type="project" value="EcoCyc"/>
</dbReference>
<dbReference type="CDD" id="cd04604">
    <property type="entry name" value="CBS_pair_SIS_assoc"/>
    <property type="match status" value="1"/>
</dbReference>
<dbReference type="CDD" id="cd05014">
    <property type="entry name" value="SIS_Kpsf"/>
    <property type="match status" value="1"/>
</dbReference>
<dbReference type="FunFam" id="3.10.580.10:FF:000013">
    <property type="entry name" value="Arabinose 5-phosphate isomerase"/>
    <property type="match status" value="1"/>
</dbReference>
<dbReference type="FunFam" id="3.40.50.10490:FF:000011">
    <property type="entry name" value="Arabinose 5-phosphate isomerase"/>
    <property type="match status" value="1"/>
</dbReference>
<dbReference type="Gene3D" id="3.10.580.10">
    <property type="entry name" value="CBS-domain"/>
    <property type="match status" value="1"/>
</dbReference>
<dbReference type="Gene3D" id="3.40.50.10490">
    <property type="entry name" value="Glucose-6-phosphate isomerase like protein, domain 1"/>
    <property type="match status" value="1"/>
</dbReference>
<dbReference type="InterPro" id="IPR000644">
    <property type="entry name" value="CBS_dom"/>
</dbReference>
<dbReference type="InterPro" id="IPR046342">
    <property type="entry name" value="CBS_dom_sf"/>
</dbReference>
<dbReference type="InterPro" id="IPR050986">
    <property type="entry name" value="GutQ/KpsF_isomerases"/>
</dbReference>
<dbReference type="InterPro" id="IPR004800">
    <property type="entry name" value="KdsD/KpsF-type"/>
</dbReference>
<dbReference type="InterPro" id="IPR001347">
    <property type="entry name" value="SIS_dom"/>
</dbReference>
<dbReference type="InterPro" id="IPR046348">
    <property type="entry name" value="SIS_dom_sf"/>
</dbReference>
<dbReference type="InterPro" id="IPR035474">
    <property type="entry name" value="SIS_Kpsf"/>
</dbReference>
<dbReference type="NCBIfam" id="TIGR00393">
    <property type="entry name" value="kpsF"/>
    <property type="match status" value="1"/>
</dbReference>
<dbReference type="NCBIfam" id="NF008581">
    <property type="entry name" value="PRK11543.1"/>
    <property type="match status" value="1"/>
</dbReference>
<dbReference type="PANTHER" id="PTHR42745">
    <property type="match status" value="1"/>
</dbReference>
<dbReference type="PANTHER" id="PTHR42745:SF2">
    <property type="entry name" value="ARABINOSE 5-PHOSPHATE ISOMERASE GUTQ"/>
    <property type="match status" value="1"/>
</dbReference>
<dbReference type="Pfam" id="PF00571">
    <property type="entry name" value="CBS"/>
    <property type="match status" value="2"/>
</dbReference>
<dbReference type="Pfam" id="PF01380">
    <property type="entry name" value="SIS"/>
    <property type="match status" value="1"/>
</dbReference>
<dbReference type="PIRSF" id="PIRSF004692">
    <property type="entry name" value="KdsD_KpsF"/>
    <property type="match status" value="1"/>
</dbReference>
<dbReference type="SUPFAM" id="SSF54631">
    <property type="entry name" value="CBS-domain pair"/>
    <property type="match status" value="1"/>
</dbReference>
<dbReference type="SUPFAM" id="SSF53697">
    <property type="entry name" value="SIS domain"/>
    <property type="match status" value="1"/>
</dbReference>
<dbReference type="PROSITE" id="PS51371">
    <property type="entry name" value="CBS"/>
    <property type="match status" value="2"/>
</dbReference>
<dbReference type="PROSITE" id="PS51464">
    <property type="entry name" value="SIS"/>
    <property type="match status" value="1"/>
</dbReference>
<sequence>MSEALLNAGRQTLMLELQEASRLPERLGDDFVRAANIILHCEGKVVVSGIGKSGHIGKKIAATLASTGTPAFFVHPAEALHGDLGMIESRDVMLFISYSGGAKELDLIIPRLEDKSIALLAMTGKPTSPLGLAAKAVLDISVEREACPMHLAPTSSTVNTLMMGDALAMAVMQARGFNEEDFARSHPAGALGARLLNKVHHLMRRDDAIPQVALTASVMDAMLELSRTGLGLVAVCDAQQQVQGVFTDGDLRRWLVGGGALTTPVNEAMTVGGTTLQSQSRAIDAKEILMKRKITAAPVVDENGKLTGAINLQDFYQAGII</sequence>
<proteinExistence type="evidence at protein level"/>
<feature type="initiator methionine" description="Removed" evidence="6">
    <location>
        <position position="1"/>
    </location>
</feature>
<feature type="chain" id="PRO_0000136572" description="Arabinose 5-phosphate isomerase GutQ">
    <location>
        <begin position="2"/>
        <end position="321"/>
    </location>
</feature>
<feature type="domain" description="SIS" evidence="4">
    <location>
        <begin position="34"/>
        <end position="177"/>
    </location>
</feature>
<feature type="domain" description="CBS 1" evidence="3">
    <location>
        <begin position="203"/>
        <end position="261"/>
    </location>
</feature>
<feature type="domain" description="CBS 2" evidence="3">
    <location>
        <begin position="269"/>
        <end position="321"/>
    </location>
</feature>
<feature type="binding site" evidence="2">
    <location>
        <begin position="49"/>
        <end position="54"/>
    </location>
    <ligand>
        <name>ATP</name>
        <dbReference type="ChEBI" id="CHEBI:30616"/>
    </ligand>
</feature>
<feature type="binding site" evidence="1">
    <location>
        <begin position="68"/>
        <end position="69"/>
    </location>
    <ligand>
        <name>substrate</name>
    </ligand>
</feature>
<feature type="binding site" evidence="1">
    <location>
        <position position="75"/>
    </location>
    <ligand>
        <name>substrate</name>
    </ligand>
</feature>
<feature type="binding site" evidence="1">
    <location>
        <position position="75"/>
    </location>
    <ligand>
        <name>Zn(2+)</name>
        <dbReference type="ChEBI" id="CHEBI:29105"/>
    </ligand>
</feature>
<feature type="binding site" evidence="1">
    <location>
        <position position="81"/>
    </location>
    <ligand>
        <name>substrate</name>
    </ligand>
</feature>
<feature type="binding site" evidence="1">
    <location>
        <begin position="107"/>
        <end position="116"/>
    </location>
    <ligand>
        <name>substrate</name>
    </ligand>
</feature>
<feature type="binding site" evidence="1">
    <location>
        <begin position="141"/>
        <end position="143"/>
    </location>
    <ligand>
        <name>substrate</name>
    </ligand>
</feature>
<feature type="binding site" evidence="1">
    <location>
        <position position="215"/>
    </location>
    <ligand>
        <name>substrate</name>
    </ligand>
</feature>
<feature type="binding site" evidence="1">
    <location>
        <position position="267"/>
    </location>
    <ligand>
        <name>substrate</name>
    </ligand>
</feature>
<feature type="site" description="Catalytically relevant" evidence="1">
    <location>
        <position position="52"/>
    </location>
</feature>
<feature type="site" description="Catalytically relevant" evidence="1">
    <location>
        <position position="104"/>
    </location>
</feature>
<feature type="site" description="Catalytically relevant" evidence="1">
    <location>
        <position position="145"/>
    </location>
</feature>
<feature type="site" description="Catalytically relevant" evidence="1">
    <location>
        <position position="186"/>
    </location>
</feature>